<accession>A5A7I8</accession>
<reference key="1">
    <citation type="journal article" date="2007" name="Plant Cell">
        <title>Calcium-dependent protein kinases regulate the production of reactive oxygen species by potato NADPH oxidase.</title>
        <authorList>
            <person name="Kobayashi M."/>
            <person name="Ohura I."/>
            <person name="Kawakita K."/>
            <person name="Yokota N."/>
            <person name="Fujiwara M."/>
            <person name="Shimamoto K."/>
            <person name="Doke N."/>
            <person name="Yoshioka H."/>
        </authorList>
    </citation>
    <scope>NUCLEOTIDE SEQUENCE [MRNA]</scope>
    <scope>FUNCTION</scope>
    <scope>ACTIVATION BY CALCIUM</scope>
    <scope>SUBCELLULAR LOCATION</scope>
</reference>
<organism>
    <name type="scientific">Solanum tuberosum</name>
    <name type="common">Potato</name>
    <dbReference type="NCBI Taxonomy" id="4113"/>
    <lineage>
        <taxon>Eukaryota</taxon>
        <taxon>Viridiplantae</taxon>
        <taxon>Streptophyta</taxon>
        <taxon>Embryophyta</taxon>
        <taxon>Tracheophyta</taxon>
        <taxon>Spermatophyta</taxon>
        <taxon>Magnoliopsida</taxon>
        <taxon>eudicotyledons</taxon>
        <taxon>Gunneridae</taxon>
        <taxon>Pentapetalae</taxon>
        <taxon>asterids</taxon>
        <taxon>lamiids</taxon>
        <taxon>Solanales</taxon>
        <taxon>Solanaceae</taxon>
        <taxon>Solanoideae</taxon>
        <taxon>Solaneae</taxon>
        <taxon>Solanum</taxon>
    </lineage>
</organism>
<gene>
    <name type="primary">CPK5</name>
    <name type="synonym">CDPK5</name>
</gene>
<sequence length="535" mass="59994">MGNACRGSFGGKTFQGYPQPQDHSESNSNPKHNSDSPKPKKEQQPLVTMNRTSTNQSYYVLGHKTPNIRDLYTLGRKLGQGQFGTTYLCTELSSGIDYACKSIAKRKLISKEDVEDVRREIQIMHHLAGHKNIVSIKGAYEDPLYVHIVMELCGGGELFDRIIQRGHYTERKAADLTKIIVGVVEACHSLGVMHRDLKPENFLLVNKDDDFSLKAIDFGLSVFFKPGQIFTDVVGSPYYVAPEVLLKHYGPEADVWTAGVILYILLSGVPPFWAETQQGIFDAVLKGHIDFDSDPWPLLSESAKDLIRKMLCMRPSERLTAHEVLCHPWICENGVAPDRALDPAVLSRLKHFSAMNKLKKMALRVIAESLSEEEIAGLKEMFKAMDTDNSGAITFDELKAGLRKYGSTLKDIEIRELMDAADVDNSGTIDYGEFIAATIHLNKLDREEHLMAAFQYFDKDGSGYITVDELQQACADHNITDVFFEDIIREVDQDNDGRIDYGEFVAMMQKGNPCIGRRTMRNSLNFSMRDAPGAH</sequence>
<proteinExistence type="evidence at transcript level"/>
<name>CDPK5_SOLTU</name>
<dbReference type="EC" id="2.7.11.1"/>
<dbReference type="EMBL" id="AB279738">
    <property type="protein sequence ID" value="BAF57914.1"/>
    <property type="molecule type" value="mRNA"/>
</dbReference>
<dbReference type="RefSeq" id="NP_001274790.1">
    <property type="nucleotide sequence ID" value="NM_001287861.1"/>
</dbReference>
<dbReference type="RefSeq" id="XP_006364343.1">
    <property type="nucleotide sequence ID" value="XM_006364281.2"/>
</dbReference>
<dbReference type="RefSeq" id="XP_006364344.1">
    <property type="nucleotide sequence ID" value="XM_006364282.2"/>
</dbReference>
<dbReference type="RefSeq" id="XP_006364345.1">
    <property type="nucleotide sequence ID" value="XM_006364283.2"/>
</dbReference>
<dbReference type="RefSeq" id="XP_006364346.1">
    <property type="nucleotide sequence ID" value="XM_006364284.2"/>
</dbReference>
<dbReference type="RefSeq" id="XP_006364347.1">
    <property type="nucleotide sequence ID" value="XM_006364285.2"/>
</dbReference>
<dbReference type="SMR" id="A5A7I8"/>
<dbReference type="FunCoup" id="A5A7I8">
    <property type="interactions" value="1860"/>
</dbReference>
<dbReference type="STRING" id="4113.A5A7I8"/>
<dbReference type="GeneID" id="102594309"/>
<dbReference type="KEGG" id="sot:102594309"/>
<dbReference type="InParanoid" id="A5A7I8"/>
<dbReference type="OrthoDB" id="40902at2759"/>
<dbReference type="Proteomes" id="UP000011115">
    <property type="component" value="Unassembled WGS sequence"/>
</dbReference>
<dbReference type="ExpressionAtlas" id="A5A7I8">
    <property type="expression patterns" value="baseline"/>
</dbReference>
<dbReference type="GO" id="GO:0005737">
    <property type="term" value="C:cytoplasm"/>
    <property type="evidence" value="ECO:0000318"/>
    <property type="project" value="GO_Central"/>
</dbReference>
<dbReference type="GO" id="GO:0005634">
    <property type="term" value="C:nucleus"/>
    <property type="evidence" value="ECO:0000318"/>
    <property type="project" value="GO_Central"/>
</dbReference>
<dbReference type="GO" id="GO:0005886">
    <property type="term" value="C:plasma membrane"/>
    <property type="evidence" value="ECO:0007669"/>
    <property type="project" value="UniProtKB-SubCell"/>
</dbReference>
<dbReference type="GO" id="GO:0005524">
    <property type="term" value="F:ATP binding"/>
    <property type="evidence" value="ECO:0007669"/>
    <property type="project" value="UniProtKB-KW"/>
</dbReference>
<dbReference type="GO" id="GO:0005509">
    <property type="term" value="F:calcium ion binding"/>
    <property type="evidence" value="ECO:0007669"/>
    <property type="project" value="InterPro"/>
</dbReference>
<dbReference type="GO" id="GO:0009931">
    <property type="term" value="F:calcium-dependent protein serine/threonine kinase activity"/>
    <property type="evidence" value="ECO:0000318"/>
    <property type="project" value="GO_Central"/>
</dbReference>
<dbReference type="GO" id="GO:0004683">
    <property type="term" value="F:calcium/calmodulin-dependent protein kinase activity"/>
    <property type="evidence" value="ECO:0000318"/>
    <property type="project" value="GO_Central"/>
</dbReference>
<dbReference type="GO" id="GO:0005516">
    <property type="term" value="F:calmodulin binding"/>
    <property type="evidence" value="ECO:0000318"/>
    <property type="project" value="GO_Central"/>
</dbReference>
<dbReference type="GO" id="GO:0106310">
    <property type="term" value="F:protein serine kinase activity"/>
    <property type="evidence" value="ECO:0007669"/>
    <property type="project" value="RHEA"/>
</dbReference>
<dbReference type="GO" id="GO:0035556">
    <property type="term" value="P:intracellular signal transduction"/>
    <property type="evidence" value="ECO:0000318"/>
    <property type="project" value="GO_Central"/>
</dbReference>
<dbReference type="CDD" id="cd05117">
    <property type="entry name" value="STKc_CAMK"/>
    <property type="match status" value="1"/>
</dbReference>
<dbReference type="FunFam" id="1.10.238.10:FF:000015">
    <property type="entry name" value="Calcium-dependent protein kinase 1"/>
    <property type="match status" value="1"/>
</dbReference>
<dbReference type="FunFam" id="3.30.200.20:FF:000004">
    <property type="entry name" value="Calcium-dependent protein kinase 1"/>
    <property type="match status" value="1"/>
</dbReference>
<dbReference type="FunFam" id="1.10.510.10:FF:000178">
    <property type="entry name" value="Calcium-dependent protein kinase 5"/>
    <property type="match status" value="1"/>
</dbReference>
<dbReference type="Gene3D" id="1.10.238.10">
    <property type="entry name" value="EF-hand"/>
    <property type="match status" value="1"/>
</dbReference>
<dbReference type="Gene3D" id="3.30.200.20">
    <property type="entry name" value="Phosphorylase Kinase, domain 1"/>
    <property type="match status" value="1"/>
</dbReference>
<dbReference type="Gene3D" id="1.10.510.10">
    <property type="entry name" value="Transferase(Phosphotransferase) domain 1"/>
    <property type="match status" value="1"/>
</dbReference>
<dbReference type="InterPro" id="IPR050205">
    <property type="entry name" value="CDPK_Ser/Thr_kinases"/>
</dbReference>
<dbReference type="InterPro" id="IPR011992">
    <property type="entry name" value="EF-hand-dom_pair"/>
</dbReference>
<dbReference type="InterPro" id="IPR018247">
    <property type="entry name" value="EF_Hand_1_Ca_BS"/>
</dbReference>
<dbReference type="InterPro" id="IPR002048">
    <property type="entry name" value="EF_hand_dom"/>
</dbReference>
<dbReference type="InterPro" id="IPR011009">
    <property type="entry name" value="Kinase-like_dom_sf"/>
</dbReference>
<dbReference type="InterPro" id="IPR000719">
    <property type="entry name" value="Prot_kinase_dom"/>
</dbReference>
<dbReference type="InterPro" id="IPR017441">
    <property type="entry name" value="Protein_kinase_ATP_BS"/>
</dbReference>
<dbReference type="InterPro" id="IPR008271">
    <property type="entry name" value="Ser/Thr_kinase_AS"/>
</dbReference>
<dbReference type="PANTHER" id="PTHR24349">
    <property type="entry name" value="SERINE/THREONINE-PROTEIN KINASE"/>
    <property type="match status" value="1"/>
</dbReference>
<dbReference type="Pfam" id="PF13499">
    <property type="entry name" value="EF-hand_7"/>
    <property type="match status" value="2"/>
</dbReference>
<dbReference type="Pfam" id="PF00069">
    <property type="entry name" value="Pkinase"/>
    <property type="match status" value="1"/>
</dbReference>
<dbReference type="SMART" id="SM00054">
    <property type="entry name" value="EFh"/>
    <property type="match status" value="4"/>
</dbReference>
<dbReference type="SMART" id="SM00220">
    <property type="entry name" value="S_TKc"/>
    <property type="match status" value="1"/>
</dbReference>
<dbReference type="SUPFAM" id="SSF47473">
    <property type="entry name" value="EF-hand"/>
    <property type="match status" value="1"/>
</dbReference>
<dbReference type="SUPFAM" id="SSF56112">
    <property type="entry name" value="Protein kinase-like (PK-like)"/>
    <property type="match status" value="1"/>
</dbReference>
<dbReference type="PROSITE" id="PS00018">
    <property type="entry name" value="EF_HAND_1"/>
    <property type="match status" value="4"/>
</dbReference>
<dbReference type="PROSITE" id="PS50222">
    <property type="entry name" value="EF_HAND_2"/>
    <property type="match status" value="4"/>
</dbReference>
<dbReference type="PROSITE" id="PS00107">
    <property type="entry name" value="PROTEIN_KINASE_ATP"/>
    <property type="match status" value="1"/>
</dbReference>
<dbReference type="PROSITE" id="PS50011">
    <property type="entry name" value="PROTEIN_KINASE_DOM"/>
    <property type="match status" value="1"/>
</dbReference>
<dbReference type="PROSITE" id="PS00108">
    <property type="entry name" value="PROTEIN_KINASE_ST"/>
    <property type="match status" value="1"/>
</dbReference>
<protein>
    <recommendedName>
        <fullName>Calcium-dependent protein kinase 5</fullName>
        <shortName>CDPK 5</shortName>
        <shortName>StCDPK5</shortName>
        <ecNumber>2.7.11.1</ecNumber>
    </recommendedName>
</protein>
<keyword id="KW-0067">ATP-binding</keyword>
<keyword id="KW-0106">Calcium</keyword>
<keyword id="KW-1003">Cell membrane</keyword>
<keyword id="KW-0418">Kinase</keyword>
<keyword id="KW-0449">Lipoprotein</keyword>
<keyword id="KW-0472">Membrane</keyword>
<keyword id="KW-0479">Metal-binding</keyword>
<keyword id="KW-0519">Myristate</keyword>
<keyword id="KW-0547">Nucleotide-binding</keyword>
<keyword id="KW-0564">Palmitate</keyword>
<keyword id="KW-0597">Phosphoprotein</keyword>
<keyword id="KW-1185">Reference proteome</keyword>
<keyword id="KW-0677">Repeat</keyword>
<keyword id="KW-0723">Serine/threonine-protein kinase</keyword>
<keyword id="KW-0808">Transferase</keyword>
<evidence type="ECO:0000250" key="1"/>
<evidence type="ECO:0000255" key="2"/>
<evidence type="ECO:0000255" key="3">
    <source>
        <dbReference type="PROSITE-ProRule" id="PRU00159"/>
    </source>
</evidence>
<evidence type="ECO:0000255" key="4">
    <source>
        <dbReference type="PROSITE-ProRule" id="PRU00448"/>
    </source>
</evidence>
<evidence type="ECO:0000255" key="5">
    <source>
        <dbReference type="PROSITE-ProRule" id="PRU10027"/>
    </source>
</evidence>
<evidence type="ECO:0000256" key="6">
    <source>
        <dbReference type="SAM" id="MobiDB-lite"/>
    </source>
</evidence>
<evidence type="ECO:0000269" key="7">
    <source>
    </source>
</evidence>
<evidence type="ECO:0000305" key="8">
    <source>
    </source>
</evidence>
<comment type="function">
    <text evidence="7">Regulates the production of reactive oxygen species (ROS) by NADPH oxidase.</text>
</comment>
<comment type="catalytic activity">
    <reaction>
        <text>L-seryl-[protein] + ATP = O-phospho-L-seryl-[protein] + ADP + H(+)</text>
        <dbReference type="Rhea" id="RHEA:17989"/>
        <dbReference type="Rhea" id="RHEA-COMP:9863"/>
        <dbReference type="Rhea" id="RHEA-COMP:11604"/>
        <dbReference type="ChEBI" id="CHEBI:15378"/>
        <dbReference type="ChEBI" id="CHEBI:29999"/>
        <dbReference type="ChEBI" id="CHEBI:30616"/>
        <dbReference type="ChEBI" id="CHEBI:83421"/>
        <dbReference type="ChEBI" id="CHEBI:456216"/>
        <dbReference type="EC" id="2.7.11.1"/>
    </reaction>
</comment>
<comment type="catalytic activity">
    <reaction>
        <text>L-threonyl-[protein] + ATP = O-phospho-L-threonyl-[protein] + ADP + H(+)</text>
        <dbReference type="Rhea" id="RHEA:46608"/>
        <dbReference type="Rhea" id="RHEA-COMP:11060"/>
        <dbReference type="Rhea" id="RHEA-COMP:11605"/>
        <dbReference type="ChEBI" id="CHEBI:15378"/>
        <dbReference type="ChEBI" id="CHEBI:30013"/>
        <dbReference type="ChEBI" id="CHEBI:30616"/>
        <dbReference type="ChEBI" id="CHEBI:61977"/>
        <dbReference type="ChEBI" id="CHEBI:456216"/>
        <dbReference type="EC" id="2.7.11.1"/>
    </reaction>
</comment>
<comment type="activity regulation">
    <text evidence="1">Activated by calcium. Autophosphorylation may play an important role in the regulation of the kinase activity (By similarity).</text>
</comment>
<comment type="subcellular location">
    <subcellularLocation>
        <location evidence="8">Cell membrane</location>
        <topology evidence="8">Lipid-anchor</topology>
    </subcellularLocation>
</comment>
<comment type="domain">
    <text evidence="1">There are 3 contiguous domains conserved in the CDPK subfamily: a kinase domain, an autoinhibitory (junction) domain and a calmodulin-like domain. The autoinhibitory domain (336-366) inactivates kinase activity under calcium-free conditions (By similarity).</text>
</comment>
<comment type="miscellaneous">
    <text>Mutagenesis of Gly-2 or Cys-5 eliminates ROS production, probably by impairing the plasma membrane targeting required for NADPH oxidase activation.</text>
</comment>
<comment type="similarity">
    <text evidence="3">Belongs to the protein kinase superfamily. Ser/Thr protein kinase family. CDPK subfamily.</text>
</comment>
<feature type="initiator methionine" description="Removed" evidence="2">
    <location>
        <position position="1"/>
    </location>
</feature>
<feature type="chain" id="PRO_0000313745" description="Calcium-dependent protein kinase 5">
    <location>
        <begin position="2"/>
        <end position="535"/>
    </location>
</feature>
<feature type="domain" description="Protein kinase" evidence="3">
    <location>
        <begin position="72"/>
        <end position="330"/>
    </location>
</feature>
<feature type="domain" description="EF-hand 1" evidence="4">
    <location>
        <begin position="373"/>
        <end position="408"/>
    </location>
</feature>
<feature type="domain" description="EF-hand 2" evidence="4">
    <location>
        <begin position="409"/>
        <end position="444"/>
    </location>
</feature>
<feature type="domain" description="EF-hand 3" evidence="4">
    <location>
        <begin position="445"/>
        <end position="480"/>
    </location>
</feature>
<feature type="domain" description="EF-hand 4" evidence="4">
    <location>
        <begin position="484"/>
        <end position="514"/>
    </location>
</feature>
<feature type="region of interest" description="Disordered" evidence="6">
    <location>
        <begin position="1"/>
        <end position="46"/>
    </location>
</feature>
<feature type="region of interest" description="Autoinhibitory domain" evidence="1">
    <location>
        <begin position="336"/>
        <end position="366"/>
    </location>
</feature>
<feature type="compositionally biased region" description="Basic and acidic residues" evidence="6">
    <location>
        <begin position="32"/>
        <end position="43"/>
    </location>
</feature>
<feature type="active site" description="Proton acceptor" evidence="3 5">
    <location>
        <position position="196"/>
    </location>
</feature>
<feature type="binding site" evidence="3">
    <location>
        <begin position="78"/>
        <end position="86"/>
    </location>
    <ligand>
        <name>ATP</name>
        <dbReference type="ChEBI" id="CHEBI:30616"/>
    </ligand>
</feature>
<feature type="binding site" evidence="3">
    <location>
        <position position="101"/>
    </location>
    <ligand>
        <name>ATP</name>
        <dbReference type="ChEBI" id="CHEBI:30616"/>
    </ligand>
</feature>
<feature type="binding site" evidence="4">
    <location>
        <position position="386"/>
    </location>
    <ligand>
        <name>Ca(2+)</name>
        <dbReference type="ChEBI" id="CHEBI:29108"/>
        <label>1</label>
    </ligand>
</feature>
<feature type="binding site" evidence="4">
    <location>
        <position position="388"/>
    </location>
    <ligand>
        <name>Ca(2+)</name>
        <dbReference type="ChEBI" id="CHEBI:29108"/>
        <label>1</label>
    </ligand>
</feature>
<feature type="binding site" evidence="4">
    <location>
        <position position="390"/>
    </location>
    <ligand>
        <name>Ca(2+)</name>
        <dbReference type="ChEBI" id="CHEBI:29108"/>
        <label>1</label>
    </ligand>
</feature>
<feature type="binding site" evidence="4">
    <location>
        <position position="397"/>
    </location>
    <ligand>
        <name>Ca(2+)</name>
        <dbReference type="ChEBI" id="CHEBI:29108"/>
        <label>1</label>
    </ligand>
</feature>
<feature type="binding site" evidence="4">
    <location>
        <position position="422"/>
    </location>
    <ligand>
        <name>Ca(2+)</name>
        <dbReference type="ChEBI" id="CHEBI:29108"/>
        <label>2</label>
    </ligand>
</feature>
<feature type="binding site" evidence="4">
    <location>
        <position position="424"/>
    </location>
    <ligand>
        <name>Ca(2+)</name>
        <dbReference type="ChEBI" id="CHEBI:29108"/>
        <label>2</label>
    </ligand>
</feature>
<feature type="binding site" evidence="4">
    <location>
        <position position="426"/>
    </location>
    <ligand>
        <name>Ca(2+)</name>
        <dbReference type="ChEBI" id="CHEBI:29108"/>
        <label>2</label>
    </ligand>
</feature>
<feature type="binding site" evidence="4">
    <location>
        <position position="428"/>
    </location>
    <ligand>
        <name>Ca(2+)</name>
        <dbReference type="ChEBI" id="CHEBI:29108"/>
        <label>2</label>
    </ligand>
</feature>
<feature type="binding site" evidence="4">
    <location>
        <position position="433"/>
    </location>
    <ligand>
        <name>Ca(2+)</name>
        <dbReference type="ChEBI" id="CHEBI:29108"/>
        <label>2</label>
    </ligand>
</feature>
<feature type="binding site" evidence="4">
    <location>
        <position position="458"/>
    </location>
    <ligand>
        <name>Ca(2+)</name>
        <dbReference type="ChEBI" id="CHEBI:29108"/>
        <label>3</label>
    </ligand>
</feature>
<feature type="binding site" evidence="4">
    <location>
        <position position="460"/>
    </location>
    <ligand>
        <name>Ca(2+)</name>
        <dbReference type="ChEBI" id="CHEBI:29108"/>
        <label>3</label>
    </ligand>
</feature>
<feature type="binding site" evidence="4">
    <location>
        <position position="462"/>
    </location>
    <ligand>
        <name>Ca(2+)</name>
        <dbReference type="ChEBI" id="CHEBI:29108"/>
        <label>3</label>
    </ligand>
</feature>
<feature type="binding site" evidence="4">
    <location>
        <position position="464"/>
    </location>
    <ligand>
        <name>Ca(2+)</name>
        <dbReference type="ChEBI" id="CHEBI:29108"/>
        <label>3</label>
    </ligand>
</feature>
<feature type="binding site" evidence="4">
    <location>
        <position position="469"/>
    </location>
    <ligand>
        <name>Ca(2+)</name>
        <dbReference type="ChEBI" id="CHEBI:29108"/>
        <label>3</label>
    </ligand>
</feature>
<feature type="binding site" evidence="4">
    <location>
        <position position="492"/>
    </location>
    <ligand>
        <name>Ca(2+)</name>
        <dbReference type="ChEBI" id="CHEBI:29108"/>
        <label>4</label>
    </ligand>
</feature>
<feature type="binding site" evidence="4">
    <location>
        <position position="494"/>
    </location>
    <ligand>
        <name>Ca(2+)</name>
        <dbReference type="ChEBI" id="CHEBI:29108"/>
        <label>4</label>
    </ligand>
</feature>
<feature type="binding site" evidence="4">
    <location>
        <position position="496"/>
    </location>
    <ligand>
        <name>Ca(2+)</name>
        <dbReference type="ChEBI" id="CHEBI:29108"/>
        <label>4</label>
    </ligand>
</feature>
<feature type="binding site" evidence="4">
    <location>
        <position position="498"/>
    </location>
    <ligand>
        <name>Ca(2+)</name>
        <dbReference type="ChEBI" id="CHEBI:29108"/>
        <label>4</label>
    </ligand>
</feature>
<feature type="binding site" evidence="4">
    <location>
        <position position="503"/>
    </location>
    <ligand>
        <name>Ca(2+)</name>
        <dbReference type="ChEBI" id="CHEBI:29108"/>
        <label>4</label>
    </ligand>
</feature>
<feature type="lipid moiety-binding region" description="N-myristoyl glycine" evidence="2">
    <location>
        <position position="2"/>
    </location>
</feature>
<feature type="lipid moiety-binding region" description="S-palmitoyl cysteine" evidence="2">
    <location>
        <position position="5"/>
    </location>
</feature>